<comment type="function">
    <text evidence="1 2 4">Channel-forming and calcium-conducting subunit of the mitochondrial inner membrane calcium uniporter complex (uniplex), which mediates calcium uptake into the mitochondrial matrix (PubMed:29995857). Mcu channel activity is regulated by the calcium-sensor subunits of the uniplex micu1 and micu2 (By similarity). Mitochondrial calcium homeostasis plays key roles in cellular physiology and regulates ATP production, cytoplasmic calcium signals and activation of cell death pathways (By similarity). Involved in buffering the amplitude of systolic calcium rises in cardiomyocytes (By similarity). While dispensable for baseline homeostatic cardiac function, acts as a key regulator of short-term mitochondrial calcium loading underlying a 'fight-or-flight' response during acute stress: acts by mediating a rapid increase of mitochondrial calcium in pacemaker cells (By similarity). Mitochondrial calcium uptake in skeletal muscle cells is involved in muscle size in adults (By similarity).</text>
</comment>
<comment type="catalytic activity">
    <reaction evidence="2">
        <text>Ca(2+)(in) = Ca(2+)(out)</text>
        <dbReference type="Rhea" id="RHEA:29671"/>
        <dbReference type="ChEBI" id="CHEBI:29108"/>
    </reaction>
</comment>
<comment type="activity regulation">
    <text evidence="2">MCU channel activity is regulated by the heterodimer composed of micu1 and micu2, which act as calcium-sensors (By similarity). At low calcium levels, micu1 occludes the pore of the MCU channel, preventing mitochondrial calcium uptake (By similarity). At higher calcium levels, calcium-binding to micu1 and micu2 induces a conformational change that weakens mcu-micu1 interactions and moves the micu1-micu2 heterodimer away from the pore, allowing calcium permeation through the channel (By similarity). MCU channel activity is gated by emre/smdt1 via the juxtamembrane helix loop (By similarity). Inhibited by ruthenium red or its derivative Ru360 (By similarity).</text>
</comment>
<comment type="subunit">
    <text evidence="2">Homotetramer (By similarity). Component of the uniplex complex (By similarity).</text>
</comment>
<comment type="interaction">
    <interactant intactId="EBI-20717912">
        <id>Q08BI9</id>
    </interactant>
    <interactant intactId="EBI-20717912">
        <id>Q08BI9</id>
        <label>mcu</label>
    </interactant>
    <organismsDiffer>false</organismsDiffer>
    <experiments>2</experiments>
</comment>
<comment type="subcellular location">
    <subcellularLocation>
        <location evidence="2">Mitochondrion inner membrane</location>
        <topology evidence="2">Multi-pass membrane protein</topology>
    </subcellularLocation>
</comment>
<comment type="domain">
    <text evidence="2">The selectivity filter, in which calcium ions are arranged in single file, is composed of two acidic rings separated by one helical turn along the central axis of the channel pore.</text>
</comment>
<comment type="similarity">
    <text evidence="7">Belongs to the MCU (TC 1.A.77) family.</text>
</comment>
<keyword id="KW-0106">Calcium</keyword>
<keyword id="KW-0107">Calcium channel</keyword>
<keyword id="KW-0109">Calcium transport</keyword>
<keyword id="KW-0175">Coiled coil</keyword>
<keyword id="KW-0407">Ion channel</keyword>
<keyword id="KW-0406">Ion transport</keyword>
<keyword id="KW-0472">Membrane</keyword>
<keyword id="KW-0479">Metal-binding</keyword>
<keyword id="KW-0496">Mitochondrion</keyword>
<keyword id="KW-0999">Mitochondrion inner membrane</keyword>
<keyword id="KW-1185">Reference proteome</keyword>
<keyword id="KW-0809">Transit peptide</keyword>
<keyword id="KW-0812">Transmembrane</keyword>
<keyword id="KW-1133">Transmembrane helix</keyword>
<keyword id="KW-0813">Transport</keyword>
<gene>
    <name evidence="5" type="primary">mcu</name>
    <name evidence="6" type="ORF">zgc:153607</name>
</gene>
<accession>Q08BI9</accession>
<reference key="1">
    <citation type="submission" date="2006-10" db="EMBL/GenBank/DDBJ databases">
        <authorList>
            <consortium name="NIH - Zebrafish Gene Collection (ZGC) project"/>
        </authorList>
    </citation>
    <scope>NUCLEOTIDE SEQUENCE [LARGE SCALE MRNA]</scope>
    <source>
        <tissue>Embryo</tissue>
    </source>
</reference>
<reference key="2">
    <citation type="journal article" date="2018" name="Nature">
        <title>Cryo-EM structures of fungal and metazoan mitochondrial calcium uniporters.</title>
        <authorList>
            <person name="Baradaran R."/>
            <person name="Wang C."/>
            <person name="Siliciano A.F."/>
            <person name="Long S.B."/>
        </authorList>
    </citation>
    <scope>FUNCTION</scope>
</reference>
<feature type="transit peptide" description="Mitochondrion" evidence="3">
    <location>
        <begin position="1"/>
        <end position="34"/>
    </location>
</feature>
<feature type="chain" id="PRO_0000282978" description="Calcium uniporter protein, mitochondrial">
    <location>
        <begin position="35"/>
        <end position="376"/>
    </location>
</feature>
<feature type="topological domain" description="Mitochondrial matrix" evidence="2">
    <location>
        <begin position="35"/>
        <end position="257"/>
    </location>
</feature>
<feature type="transmembrane region" description="Helical" evidence="3">
    <location>
        <begin position="258"/>
        <end position="280"/>
    </location>
</feature>
<feature type="topological domain" description="Mitochondrial intermembrane" evidence="2">
    <location>
        <begin position="281"/>
        <end position="289"/>
    </location>
</feature>
<feature type="transmembrane region" description="Helical" evidence="3">
    <location>
        <begin position="290"/>
        <end position="309"/>
    </location>
</feature>
<feature type="topological domain" description="Mitochondrial matrix" evidence="2">
    <location>
        <begin position="310"/>
        <end position="376"/>
    </location>
</feature>
<feature type="region of interest" description="N-terminal MCU domain" evidence="2">
    <location>
        <begin position="99"/>
        <end position="189"/>
    </location>
</feature>
<feature type="region of interest" description="Juxtamembrane helix" evidence="2">
    <location>
        <begin position="309"/>
        <end position="314"/>
    </location>
</feature>
<feature type="coiled-coil region" evidence="3">
    <location>
        <begin position="213"/>
        <end position="254"/>
    </location>
</feature>
<feature type="coiled-coil region" evidence="3">
    <location>
        <begin position="336"/>
        <end position="363"/>
    </location>
</feature>
<feature type="short sequence motif" description="Selectivity filter" evidence="2">
    <location>
        <begin position="284"/>
        <end position="292"/>
    </location>
</feature>
<feature type="binding site" evidence="2">
    <location>
        <position position="288"/>
    </location>
    <ligand>
        <name>Ca(2+)</name>
        <dbReference type="ChEBI" id="CHEBI:29108"/>
    </ligand>
</feature>
<evidence type="ECO:0000250" key="1">
    <source>
        <dbReference type="UniProtKB" id="Q3UMR5"/>
    </source>
</evidence>
<evidence type="ECO:0000250" key="2">
    <source>
        <dbReference type="UniProtKB" id="Q8NE86"/>
    </source>
</evidence>
<evidence type="ECO:0000255" key="3"/>
<evidence type="ECO:0000269" key="4">
    <source>
    </source>
</evidence>
<evidence type="ECO:0000303" key="5">
    <source>
    </source>
</evidence>
<evidence type="ECO:0000303" key="6">
    <source ref="1"/>
</evidence>
<evidence type="ECO:0000305" key="7"/>
<sequence>MAAKVCRSVLLLSRSSGAVASSAYPAFGVSSQRHQGTKTEALSMSLGGHQTVRRAHGLRTGGRCALFCHPSATLTAQGWKGSPSWQVQRLLCSPAAEDVSVVYQNGLPVISVRLPSRRERCQFTLKPLSDTVGVFLQQLQAEDRGIDRVTIYSADGARIASSTGIDILLMDNFKLVINDTSYLVQPPRRDLLPHEDGERLNDVKILVQQLYTTLRIEEHQLNKERELIGRLEDLNSQLQPLEKVKEELSKKAERRTTWVLWGGMAYMATQFGILARLTWWEYSWDIMEPVTYFITYGTAMAMYAYFVLTRQEYLYPDARDRQYLLFFHRGAKRTRFDIEKYNKLKDAIAEAELDLKRLRDPLQLNLPIQQIDTSKD</sequence>
<name>MCU_DANRE</name>
<dbReference type="EMBL" id="BC124705">
    <property type="protein sequence ID" value="AAI24706.1"/>
    <property type="molecule type" value="mRNA"/>
</dbReference>
<dbReference type="RefSeq" id="NP_001070793.1">
    <property type="nucleotide sequence ID" value="NM_001077325.1"/>
</dbReference>
<dbReference type="EMDB" id="EMD-7972"/>
<dbReference type="SMR" id="Q08BI9"/>
<dbReference type="FunCoup" id="Q08BI9">
    <property type="interactions" value="1476"/>
</dbReference>
<dbReference type="STRING" id="7955.ENSDARP00000133611"/>
<dbReference type="PaxDb" id="7955-ENSDARP00000108433"/>
<dbReference type="GeneID" id="768182"/>
<dbReference type="KEGG" id="dre:768182"/>
<dbReference type="AGR" id="ZFIN:ZDB-GENE-061013-24"/>
<dbReference type="CTD" id="90550"/>
<dbReference type="ZFIN" id="ZDB-GENE-061013-24">
    <property type="gene designation" value="mcu"/>
</dbReference>
<dbReference type="eggNOG" id="KOG2966">
    <property type="taxonomic scope" value="Eukaryota"/>
</dbReference>
<dbReference type="InParanoid" id="Q08BI9"/>
<dbReference type="OrthoDB" id="278338at2759"/>
<dbReference type="PhylomeDB" id="Q08BI9"/>
<dbReference type="PRO" id="PR:Q08BI9"/>
<dbReference type="Proteomes" id="UP000000437">
    <property type="component" value="Chromosome 13"/>
</dbReference>
<dbReference type="GO" id="GO:0034704">
    <property type="term" value="C:calcium channel complex"/>
    <property type="evidence" value="ECO:0000250"/>
    <property type="project" value="UniProtKB"/>
</dbReference>
<dbReference type="GO" id="GO:0005743">
    <property type="term" value="C:mitochondrial inner membrane"/>
    <property type="evidence" value="ECO:0000250"/>
    <property type="project" value="UniProtKB"/>
</dbReference>
<dbReference type="GO" id="GO:1990246">
    <property type="term" value="C:uniplex complex"/>
    <property type="evidence" value="ECO:0000250"/>
    <property type="project" value="UniProtKB"/>
</dbReference>
<dbReference type="GO" id="GO:0005262">
    <property type="term" value="F:calcium channel activity"/>
    <property type="evidence" value="ECO:0000250"/>
    <property type="project" value="UniProtKB"/>
</dbReference>
<dbReference type="GO" id="GO:0042802">
    <property type="term" value="F:identical protein binding"/>
    <property type="evidence" value="ECO:0000353"/>
    <property type="project" value="IntAct"/>
</dbReference>
<dbReference type="GO" id="GO:0046872">
    <property type="term" value="F:metal ion binding"/>
    <property type="evidence" value="ECO:0007669"/>
    <property type="project" value="UniProtKB-KW"/>
</dbReference>
<dbReference type="GO" id="GO:0015292">
    <property type="term" value="F:uniporter activity"/>
    <property type="evidence" value="ECO:0000250"/>
    <property type="project" value="UniProtKB"/>
</dbReference>
<dbReference type="GO" id="GO:0007015">
    <property type="term" value="P:actin filament organization"/>
    <property type="evidence" value="ECO:0000315"/>
    <property type="project" value="ZFIN"/>
</dbReference>
<dbReference type="GO" id="GO:0036444">
    <property type="term" value="P:calcium import into the mitochondrion"/>
    <property type="evidence" value="ECO:0000314"/>
    <property type="project" value="ZFIN"/>
</dbReference>
<dbReference type="GO" id="GO:0019722">
    <property type="term" value="P:calcium-mediated signaling"/>
    <property type="evidence" value="ECO:0000250"/>
    <property type="project" value="UniProtKB"/>
</dbReference>
<dbReference type="GO" id="GO:0043009">
    <property type="term" value="P:chordate embryonic development"/>
    <property type="evidence" value="ECO:0000315"/>
    <property type="project" value="ZFIN"/>
</dbReference>
<dbReference type="GO" id="GO:0060027">
    <property type="term" value="P:convergent extension involved in gastrulation"/>
    <property type="evidence" value="ECO:0000315"/>
    <property type="project" value="ZFIN"/>
</dbReference>
<dbReference type="GO" id="GO:0051649">
    <property type="term" value="P:establishment of localization in cell"/>
    <property type="evidence" value="ECO:0000315"/>
    <property type="project" value="ZFIN"/>
</dbReference>
<dbReference type="GO" id="GO:0042593">
    <property type="term" value="P:glucose homeostasis"/>
    <property type="evidence" value="ECO:0000250"/>
    <property type="project" value="UniProtKB"/>
</dbReference>
<dbReference type="GO" id="GO:0051560">
    <property type="term" value="P:mitochondrial calcium ion homeostasis"/>
    <property type="evidence" value="ECO:0000315"/>
    <property type="project" value="ZFIN"/>
</dbReference>
<dbReference type="GO" id="GO:0006851">
    <property type="term" value="P:mitochondrial calcium ion transmembrane transport"/>
    <property type="evidence" value="ECO:0000250"/>
    <property type="project" value="UniProtKB"/>
</dbReference>
<dbReference type="GO" id="GO:0032024">
    <property type="term" value="P:positive regulation of insulin secretion"/>
    <property type="evidence" value="ECO:0000250"/>
    <property type="project" value="UniProtKB"/>
</dbReference>
<dbReference type="GO" id="GO:0051561">
    <property type="term" value="P:positive regulation of mitochondrial calcium ion concentration"/>
    <property type="evidence" value="ECO:0000250"/>
    <property type="project" value="UniProtKB"/>
</dbReference>
<dbReference type="GO" id="GO:0051259">
    <property type="term" value="P:protein complex oligomerization"/>
    <property type="evidence" value="ECO:0000250"/>
    <property type="project" value="UniProtKB"/>
</dbReference>
<dbReference type="GO" id="GO:0008016">
    <property type="term" value="P:regulation of heart contraction"/>
    <property type="evidence" value="ECO:0000315"/>
    <property type="project" value="ZFIN"/>
</dbReference>
<dbReference type="InterPro" id="IPR006769">
    <property type="entry name" value="MCU_C"/>
</dbReference>
<dbReference type="InterPro" id="IPR039055">
    <property type="entry name" value="MCU_fam"/>
</dbReference>
<dbReference type="PANTHER" id="PTHR13462">
    <property type="entry name" value="CALCIUM UNIPORTER PROTEIN, MITOCHONDRIAL"/>
    <property type="match status" value="1"/>
</dbReference>
<dbReference type="PANTHER" id="PTHR13462:SF16">
    <property type="entry name" value="CALCIUM UNIPORTER PROTEIN, MITOCHONDRIAL"/>
    <property type="match status" value="1"/>
</dbReference>
<dbReference type="Pfam" id="PF04678">
    <property type="entry name" value="MCU"/>
    <property type="match status" value="1"/>
</dbReference>
<proteinExistence type="evidence at protein level"/>
<protein>
    <recommendedName>
        <fullName>Calcium uniporter protein, mitochondrial</fullName>
    </recommendedName>
</protein>
<organism>
    <name type="scientific">Danio rerio</name>
    <name type="common">Zebrafish</name>
    <name type="synonym">Brachydanio rerio</name>
    <dbReference type="NCBI Taxonomy" id="7955"/>
    <lineage>
        <taxon>Eukaryota</taxon>
        <taxon>Metazoa</taxon>
        <taxon>Chordata</taxon>
        <taxon>Craniata</taxon>
        <taxon>Vertebrata</taxon>
        <taxon>Euteleostomi</taxon>
        <taxon>Actinopterygii</taxon>
        <taxon>Neopterygii</taxon>
        <taxon>Teleostei</taxon>
        <taxon>Ostariophysi</taxon>
        <taxon>Cypriniformes</taxon>
        <taxon>Danionidae</taxon>
        <taxon>Danioninae</taxon>
        <taxon>Danio</taxon>
    </lineage>
</organism>